<feature type="chain" id="PRO_0000256295" description="Chorismate synthase">
    <location>
        <begin position="1"/>
        <end position="393"/>
    </location>
</feature>
<feature type="binding site" evidence="1">
    <location>
        <position position="40"/>
    </location>
    <ligand>
        <name>NADP(+)</name>
        <dbReference type="ChEBI" id="CHEBI:58349"/>
    </ligand>
</feature>
<feature type="binding site" evidence="1">
    <location>
        <position position="46"/>
    </location>
    <ligand>
        <name>NADP(+)</name>
        <dbReference type="ChEBI" id="CHEBI:58349"/>
    </ligand>
</feature>
<feature type="binding site" evidence="1">
    <location>
        <begin position="129"/>
        <end position="131"/>
    </location>
    <ligand>
        <name>FMN</name>
        <dbReference type="ChEBI" id="CHEBI:58210"/>
    </ligand>
</feature>
<feature type="binding site" evidence="1">
    <location>
        <begin position="249"/>
        <end position="250"/>
    </location>
    <ligand>
        <name>FMN</name>
        <dbReference type="ChEBI" id="CHEBI:58210"/>
    </ligand>
</feature>
<feature type="binding site" evidence="1">
    <location>
        <position position="301"/>
    </location>
    <ligand>
        <name>FMN</name>
        <dbReference type="ChEBI" id="CHEBI:58210"/>
    </ligand>
</feature>
<feature type="binding site" evidence="1">
    <location>
        <begin position="316"/>
        <end position="320"/>
    </location>
    <ligand>
        <name>FMN</name>
        <dbReference type="ChEBI" id="CHEBI:58210"/>
    </ligand>
</feature>
<feature type="binding site" evidence="1">
    <location>
        <position position="342"/>
    </location>
    <ligand>
        <name>FMN</name>
        <dbReference type="ChEBI" id="CHEBI:58210"/>
    </ligand>
</feature>
<accession>Q39X06</accession>
<reference key="1">
    <citation type="journal article" date="2009" name="BMC Microbiol.">
        <title>The genome sequence of Geobacter metallireducens: features of metabolism, physiology and regulation common and dissimilar to Geobacter sulfurreducens.</title>
        <authorList>
            <person name="Aklujkar M."/>
            <person name="Krushkal J."/>
            <person name="DiBartolo G."/>
            <person name="Lapidus A."/>
            <person name="Land M.L."/>
            <person name="Lovley D.R."/>
        </authorList>
    </citation>
    <scope>NUCLEOTIDE SEQUENCE [LARGE SCALE GENOMIC DNA]</scope>
    <source>
        <strain>ATCC 53774 / DSM 7210 / GS-15</strain>
    </source>
</reference>
<proteinExistence type="inferred from homology"/>
<name>AROC_GEOMG</name>
<sequence>MLRYLTAGESHGPQLTAIIEGIPAGLKISEETINVDLARRQGGYGRGGRMLIEKDQVQILSGVRWGETIGSPVTLCVVNRDWVNWQEKMSPHERHRDDKIRVTRSRPGHADLPGAMKYNHRDVRNILERSSARETAMRVAVGSVARAFLASFGVTVSGFVVELGGIKAERRGLSSDRLRELAAKSELATYDPEAEARMKAFIDSVKDAGDTAGGVVEVVVTGAPVGLGSHVQWDRKLDARLAMAVMSIQAIKGVEIGLGFETARRPGSQVHDEIYFDSSRIAHGEATGFFRKTNNAGGIEGGITNGEEIVIRAAMKPIPTLYKPLSSVDMLTKEPFEATVERSDVCAVPAAAVVAESVVAIEIASAFLEKFGGDSLAEIRRNYDGYLDYLRSF</sequence>
<protein>
    <recommendedName>
        <fullName evidence="1">Chorismate synthase</fullName>
        <shortName evidence="1">CS</shortName>
        <ecNumber evidence="1">4.2.3.5</ecNumber>
    </recommendedName>
    <alternativeName>
        <fullName evidence="1">5-enolpyruvylshikimate-3-phosphate phospholyase</fullName>
    </alternativeName>
</protein>
<gene>
    <name evidence="1" type="primary">aroC</name>
    <name type="ordered locus">Gmet_0976</name>
</gene>
<comment type="function">
    <text evidence="1">Catalyzes the anti-1,4-elimination of the C-3 phosphate and the C-6 proR hydrogen from 5-enolpyruvylshikimate-3-phosphate (EPSP) to yield chorismate, which is the branch point compound that serves as the starting substrate for the three terminal pathways of aromatic amino acid biosynthesis. This reaction introduces a second double bond into the aromatic ring system.</text>
</comment>
<comment type="catalytic activity">
    <reaction evidence="1">
        <text>5-O-(1-carboxyvinyl)-3-phosphoshikimate = chorismate + phosphate</text>
        <dbReference type="Rhea" id="RHEA:21020"/>
        <dbReference type="ChEBI" id="CHEBI:29748"/>
        <dbReference type="ChEBI" id="CHEBI:43474"/>
        <dbReference type="ChEBI" id="CHEBI:57701"/>
        <dbReference type="EC" id="4.2.3.5"/>
    </reaction>
</comment>
<comment type="cofactor">
    <cofactor evidence="1">
        <name>FMNH2</name>
        <dbReference type="ChEBI" id="CHEBI:57618"/>
    </cofactor>
    <text evidence="1">Reduced FMN (FMNH(2)).</text>
</comment>
<comment type="pathway">
    <text evidence="1">Metabolic intermediate biosynthesis; chorismate biosynthesis; chorismate from D-erythrose 4-phosphate and phosphoenolpyruvate: step 7/7.</text>
</comment>
<comment type="subunit">
    <text evidence="1">Homotetramer.</text>
</comment>
<comment type="similarity">
    <text evidence="1">Belongs to the chorismate synthase family.</text>
</comment>
<evidence type="ECO:0000255" key="1">
    <source>
        <dbReference type="HAMAP-Rule" id="MF_00300"/>
    </source>
</evidence>
<organism>
    <name type="scientific">Geobacter metallireducens (strain ATCC 53774 / DSM 7210 / GS-15)</name>
    <dbReference type="NCBI Taxonomy" id="269799"/>
    <lineage>
        <taxon>Bacteria</taxon>
        <taxon>Pseudomonadati</taxon>
        <taxon>Thermodesulfobacteriota</taxon>
        <taxon>Desulfuromonadia</taxon>
        <taxon>Geobacterales</taxon>
        <taxon>Geobacteraceae</taxon>
        <taxon>Geobacter</taxon>
    </lineage>
</organism>
<keyword id="KW-0028">Amino-acid biosynthesis</keyword>
<keyword id="KW-0057">Aromatic amino acid biosynthesis</keyword>
<keyword id="KW-0274">FAD</keyword>
<keyword id="KW-0285">Flavoprotein</keyword>
<keyword id="KW-0288">FMN</keyword>
<keyword id="KW-0456">Lyase</keyword>
<keyword id="KW-0521">NADP</keyword>
<keyword id="KW-1185">Reference proteome</keyword>
<dbReference type="EC" id="4.2.3.5" evidence="1"/>
<dbReference type="EMBL" id="CP000148">
    <property type="protein sequence ID" value="ABB31218.1"/>
    <property type="molecule type" value="Genomic_DNA"/>
</dbReference>
<dbReference type="RefSeq" id="WP_004514371.1">
    <property type="nucleotide sequence ID" value="NC_007517.1"/>
</dbReference>
<dbReference type="SMR" id="Q39X06"/>
<dbReference type="STRING" id="269799.Gmet_0976"/>
<dbReference type="KEGG" id="gme:Gmet_0976"/>
<dbReference type="eggNOG" id="COG0082">
    <property type="taxonomic scope" value="Bacteria"/>
</dbReference>
<dbReference type="HOGENOM" id="CLU_034547_2_0_7"/>
<dbReference type="UniPathway" id="UPA00053">
    <property type="reaction ID" value="UER00090"/>
</dbReference>
<dbReference type="Proteomes" id="UP000007073">
    <property type="component" value="Chromosome"/>
</dbReference>
<dbReference type="GO" id="GO:0005829">
    <property type="term" value="C:cytosol"/>
    <property type="evidence" value="ECO:0007669"/>
    <property type="project" value="TreeGrafter"/>
</dbReference>
<dbReference type="GO" id="GO:0004107">
    <property type="term" value="F:chorismate synthase activity"/>
    <property type="evidence" value="ECO:0007669"/>
    <property type="project" value="UniProtKB-UniRule"/>
</dbReference>
<dbReference type="GO" id="GO:0010181">
    <property type="term" value="F:FMN binding"/>
    <property type="evidence" value="ECO:0007669"/>
    <property type="project" value="TreeGrafter"/>
</dbReference>
<dbReference type="GO" id="GO:0008652">
    <property type="term" value="P:amino acid biosynthetic process"/>
    <property type="evidence" value="ECO:0007669"/>
    <property type="project" value="UniProtKB-KW"/>
</dbReference>
<dbReference type="GO" id="GO:0009073">
    <property type="term" value="P:aromatic amino acid family biosynthetic process"/>
    <property type="evidence" value="ECO:0007669"/>
    <property type="project" value="UniProtKB-KW"/>
</dbReference>
<dbReference type="GO" id="GO:0009423">
    <property type="term" value="P:chorismate biosynthetic process"/>
    <property type="evidence" value="ECO:0007669"/>
    <property type="project" value="UniProtKB-UniRule"/>
</dbReference>
<dbReference type="CDD" id="cd07304">
    <property type="entry name" value="Chorismate_synthase"/>
    <property type="match status" value="1"/>
</dbReference>
<dbReference type="FunFam" id="3.60.150.10:FF:000002">
    <property type="entry name" value="Chorismate synthase"/>
    <property type="match status" value="1"/>
</dbReference>
<dbReference type="Gene3D" id="3.60.150.10">
    <property type="entry name" value="Chorismate synthase AroC"/>
    <property type="match status" value="1"/>
</dbReference>
<dbReference type="HAMAP" id="MF_00300">
    <property type="entry name" value="Chorismate_synth"/>
    <property type="match status" value="1"/>
</dbReference>
<dbReference type="InterPro" id="IPR000453">
    <property type="entry name" value="Chorismate_synth"/>
</dbReference>
<dbReference type="InterPro" id="IPR035904">
    <property type="entry name" value="Chorismate_synth_AroC_sf"/>
</dbReference>
<dbReference type="InterPro" id="IPR020541">
    <property type="entry name" value="Chorismate_synthase_CS"/>
</dbReference>
<dbReference type="NCBIfam" id="TIGR00033">
    <property type="entry name" value="aroC"/>
    <property type="match status" value="1"/>
</dbReference>
<dbReference type="NCBIfam" id="NF003793">
    <property type="entry name" value="PRK05382.1"/>
    <property type="match status" value="1"/>
</dbReference>
<dbReference type="PANTHER" id="PTHR21085">
    <property type="entry name" value="CHORISMATE SYNTHASE"/>
    <property type="match status" value="1"/>
</dbReference>
<dbReference type="PANTHER" id="PTHR21085:SF0">
    <property type="entry name" value="CHORISMATE SYNTHASE"/>
    <property type="match status" value="1"/>
</dbReference>
<dbReference type="Pfam" id="PF01264">
    <property type="entry name" value="Chorismate_synt"/>
    <property type="match status" value="1"/>
</dbReference>
<dbReference type="PIRSF" id="PIRSF001456">
    <property type="entry name" value="Chorismate_synth"/>
    <property type="match status" value="1"/>
</dbReference>
<dbReference type="SUPFAM" id="SSF103263">
    <property type="entry name" value="Chorismate synthase, AroC"/>
    <property type="match status" value="1"/>
</dbReference>
<dbReference type="PROSITE" id="PS00787">
    <property type="entry name" value="CHORISMATE_SYNTHASE_1"/>
    <property type="match status" value="1"/>
</dbReference>
<dbReference type="PROSITE" id="PS00788">
    <property type="entry name" value="CHORISMATE_SYNTHASE_2"/>
    <property type="match status" value="1"/>
</dbReference>
<dbReference type="PROSITE" id="PS00789">
    <property type="entry name" value="CHORISMATE_SYNTHASE_3"/>
    <property type="match status" value="1"/>
</dbReference>